<name>RNFH_HALHL</name>
<organism>
    <name type="scientific">Halorhodospira halophila (strain DSM 244 / SL1)</name>
    <name type="common">Ectothiorhodospira halophila (strain DSM 244 / SL1)</name>
    <dbReference type="NCBI Taxonomy" id="349124"/>
    <lineage>
        <taxon>Bacteria</taxon>
        <taxon>Pseudomonadati</taxon>
        <taxon>Pseudomonadota</taxon>
        <taxon>Gammaproteobacteria</taxon>
        <taxon>Chromatiales</taxon>
        <taxon>Ectothiorhodospiraceae</taxon>
        <taxon>Halorhodospira</taxon>
    </lineage>
</organism>
<proteinExistence type="inferred from homology"/>
<dbReference type="EMBL" id="CP000544">
    <property type="protein sequence ID" value="ABM62250.1"/>
    <property type="molecule type" value="Genomic_DNA"/>
</dbReference>
<dbReference type="RefSeq" id="WP_011814272.1">
    <property type="nucleotide sequence ID" value="NC_008789.1"/>
</dbReference>
<dbReference type="SMR" id="A1WX38"/>
<dbReference type="STRING" id="349124.Hhal_1483"/>
<dbReference type="KEGG" id="hha:Hhal_1483"/>
<dbReference type="eggNOG" id="COG2914">
    <property type="taxonomic scope" value="Bacteria"/>
</dbReference>
<dbReference type="HOGENOM" id="CLU_150721_1_0_6"/>
<dbReference type="OrthoDB" id="9796575at2"/>
<dbReference type="Proteomes" id="UP000000647">
    <property type="component" value="Chromosome"/>
</dbReference>
<dbReference type="Gene3D" id="3.10.20.280">
    <property type="entry name" value="RnfH-like"/>
    <property type="match status" value="1"/>
</dbReference>
<dbReference type="HAMAP" id="MF_00460">
    <property type="entry name" value="UPF0125_RnfH"/>
    <property type="match status" value="1"/>
</dbReference>
<dbReference type="InterPro" id="IPR016155">
    <property type="entry name" value="Mopterin_synth/thiamin_S_b"/>
</dbReference>
<dbReference type="InterPro" id="IPR005346">
    <property type="entry name" value="RnfH"/>
</dbReference>
<dbReference type="InterPro" id="IPR037021">
    <property type="entry name" value="RnfH_sf"/>
</dbReference>
<dbReference type="NCBIfam" id="NF002490">
    <property type="entry name" value="PRK01777.1"/>
    <property type="match status" value="1"/>
</dbReference>
<dbReference type="PANTHER" id="PTHR37483">
    <property type="entry name" value="UPF0125 PROTEIN RATB"/>
    <property type="match status" value="1"/>
</dbReference>
<dbReference type="PANTHER" id="PTHR37483:SF1">
    <property type="entry name" value="UPF0125 PROTEIN RATB"/>
    <property type="match status" value="1"/>
</dbReference>
<dbReference type="Pfam" id="PF03658">
    <property type="entry name" value="Ub-RnfH"/>
    <property type="match status" value="1"/>
</dbReference>
<dbReference type="SUPFAM" id="SSF54285">
    <property type="entry name" value="MoaD/ThiS"/>
    <property type="match status" value="1"/>
</dbReference>
<accession>A1WX38</accession>
<feature type="chain" id="PRO_1000013578" description="Protein RnfH">
    <location>
        <begin position="1"/>
        <end position="97"/>
    </location>
</feature>
<sequence>MSSEGELGIEVVYALPGQQTVLRVELPAGSTAGDALNASGVLERHPEIDLTRQSVGVFGQIVGLDTPLHNGDRVEVYRPLQVDPKEARKRRAARKAS</sequence>
<keyword id="KW-1185">Reference proteome</keyword>
<reference key="1">
    <citation type="submission" date="2006-12" db="EMBL/GenBank/DDBJ databases">
        <title>Complete sequence of Halorhodospira halophila SL1.</title>
        <authorList>
            <consortium name="US DOE Joint Genome Institute"/>
            <person name="Copeland A."/>
            <person name="Lucas S."/>
            <person name="Lapidus A."/>
            <person name="Barry K."/>
            <person name="Detter J.C."/>
            <person name="Glavina del Rio T."/>
            <person name="Hammon N."/>
            <person name="Israni S."/>
            <person name="Dalin E."/>
            <person name="Tice H."/>
            <person name="Pitluck S."/>
            <person name="Saunders E."/>
            <person name="Brettin T."/>
            <person name="Bruce D."/>
            <person name="Han C."/>
            <person name="Tapia R."/>
            <person name="Schmutz J."/>
            <person name="Larimer F."/>
            <person name="Land M."/>
            <person name="Hauser L."/>
            <person name="Kyrpides N."/>
            <person name="Mikhailova N."/>
            <person name="Hoff W."/>
            <person name="Richardson P."/>
        </authorList>
    </citation>
    <scope>NUCLEOTIDE SEQUENCE [LARGE SCALE GENOMIC DNA]</scope>
    <source>
        <strain>DSM 244 / SL1</strain>
    </source>
</reference>
<gene>
    <name evidence="1" type="primary">rnfH</name>
    <name type="ordered locus">Hhal_1483</name>
</gene>
<comment type="similarity">
    <text evidence="1">Belongs to the UPF0125 (RnfH) family.</text>
</comment>
<protein>
    <recommendedName>
        <fullName evidence="1">Protein RnfH</fullName>
    </recommendedName>
</protein>
<evidence type="ECO:0000255" key="1">
    <source>
        <dbReference type="HAMAP-Rule" id="MF_00460"/>
    </source>
</evidence>